<sequence>MKLVYTDIRNPLTQYLTEQTATFAEQGKRVFYIAPNSLSFEMERKVLEYLPEQATFDIIVTRFGQLARYLMIDRKEAGQPLDDVGLAMIFFRVLSQFEDGDLKVYGRLQTDFGFINQLVALYKELQRANMSILDLEAMDSPDKQADLVKIFLAVTDILSKEGFEHQSKLAQLTGLVETGQLDEQLKNIVLVVDGFSRFSAEEEALVSALNERVSEILIGVYASKKAVQATYAEGNVYQANVDFLRQLSAQFQTKATYIGQEPVLDSIGKFSKNMEAYYDYSGTMIDLTPADQEKIQLWEVVNQKEEVEQVATAIRQHVHQGARYKDILLLLGDVDSYKLQIGKIFDKYDIPYYFGKAEEMSHHPLVHFVESLERLRRYRFRAEDLLNLLKSGLYASISQKELDLFESYILFADMKGQAAFSRAFSVNGRADYDAEVIKEKRLVYDLTVLEPLRAKIMEPLNQLFKAGPQSGTALLEKFMAFLEAIDLPKNMEKMSRNLSEVEQEKEEQVWKSFTHLLENFHQIFGKEKLKMDDFLAILQAGMQASHYRTVPATVDVVNVKSYDLIEPHTAKYVYAIGMGQSNFPKVAKNTSLLTEEEMEKVNLVSASSSRFDLVSRENIKKNHAAMMSLLNSATEQLVISTPQIYNEGEDSLSPYIKILQKMGLKSEERGRIKTLSPQDIGHYKSLLSRLIESERPSLETEEWEGQRAFWTVLVRHLKKKLESQSIEIPTITGDIASKQLSDETLAALYPEDKPLNLSASSLTNFYNNQYLYFVRNVLRLREQESIHPTAFQHGLFLHRIFERVVMDQSELDFDQKVDKAILRTRDEAEFAMFYNQDADARYTEEVLDKIARSSATILRDNDLVEIDGQEKSFRQDKALVFDLQNGKSVHVNGTIDRLDTLQINQAVGVVDYKSSDQSFSVGDFYNGLKPQLVTYLAALQELDETKDKPVFGAMYLHLQDPIIKLKDTKNLEQLEGAANTSLVYKGLFLKEESLGLNHFYQTRNQLYTEDEFAVLLNHNQELYKQAAMDILAGRFAINPYTKDGRSVAGEQLKAITGFEADRHMGMARRLVKEAKRQDWMERMKGGQD</sequence>
<accession>A4VUD1</accession>
<feature type="chain" id="PRO_0000379413" description="ATP-dependent helicase/deoxyribonuclease subunit B">
    <location>
        <begin position="1"/>
        <end position="1088"/>
    </location>
</feature>
<gene>
    <name evidence="1" type="primary">rexB</name>
    <name type="ordered locus">SSU05_0754</name>
</gene>
<name>ADDB_STRSY</name>
<reference key="1">
    <citation type="journal article" date="2007" name="PLoS ONE">
        <title>A glimpse of streptococcal toxic shock syndrome from comparative genomics of S. suis 2 Chinese isolates.</title>
        <authorList>
            <person name="Chen C."/>
            <person name="Tang J."/>
            <person name="Dong W."/>
            <person name="Wang C."/>
            <person name="Feng Y."/>
            <person name="Wang J."/>
            <person name="Zheng F."/>
            <person name="Pan X."/>
            <person name="Liu D."/>
            <person name="Li M."/>
            <person name="Song Y."/>
            <person name="Zhu X."/>
            <person name="Sun H."/>
            <person name="Feng T."/>
            <person name="Guo Z."/>
            <person name="Ju A."/>
            <person name="Ge J."/>
            <person name="Dong Y."/>
            <person name="Sun W."/>
            <person name="Jiang Y."/>
            <person name="Wang J."/>
            <person name="Yan J."/>
            <person name="Yang H."/>
            <person name="Wang X."/>
            <person name="Gao G.F."/>
            <person name="Yang R."/>
            <person name="Wang J."/>
            <person name="Yu J."/>
        </authorList>
    </citation>
    <scope>NUCLEOTIDE SEQUENCE [LARGE SCALE GENOMIC DNA]</scope>
    <source>
        <strain>05ZYH33</strain>
    </source>
</reference>
<evidence type="ECO:0000255" key="1">
    <source>
        <dbReference type="HAMAP-Rule" id="MF_01453"/>
    </source>
</evidence>
<protein>
    <recommendedName>
        <fullName evidence="1">ATP-dependent helicase/deoxyribonuclease subunit B</fullName>
        <ecNumber evidence="1">3.1.-.-</ecNumber>
    </recommendedName>
    <alternativeName>
        <fullName evidence="1">ATP-dependent helicase/nuclease subunit RexB</fullName>
    </alternativeName>
</protein>
<organism>
    <name type="scientific">Streptococcus suis (strain 05ZYH33)</name>
    <dbReference type="NCBI Taxonomy" id="391295"/>
    <lineage>
        <taxon>Bacteria</taxon>
        <taxon>Bacillati</taxon>
        <taxon>Bacillota</taxon>
        <taxon>Bacilli</taxon>
        <taxon>Lactobacillales</taxon>
        <taxon>Streptococcaceae</taxon>
        <taxon>Streptococcus</taxon>
    </lineage>
</organism>
<keyword id="KW-0067">ATP-binding</keyword>
<keyword id="KW-0227">DNA damage</keyword>
<keyword id="KW-0234">DNA repair</keyword>
<keyword id="KW-0238">DNA-binding</keyword>
<keyword id="KW-0269">Exonuclease</keyword>
<keyword id="KW-0347">Helicase</keyword>
<keyword id="KW-0378">Hydrolase</keyword>
<keyword id="KW-0540">Nuclease</keyword>
<keyword id="KW-0547">Nucleotide-binding</keyword>
<dbReference type="EC" id="3.1.-.-" evidence="1"/>
<dbReference type="EMBL" id="CP000407">
    <property type="protein sequence ID" value="ABP89720.1"/>
    <property type="molecule type" value="Genomic_DNA"/>
</dbReference>
<dbReference type="SMR" id="A4VUD1"/>
<dbReference type="STRING" id="391295.SSU05_0754"/>
<dbReference type="KEGG" id="ssu:SSU05_0754"/>
<dbReference type="eggNOG" id="COG3857">
    <property type="taxonomic scope" value="Bacteria"/>
</dbReference>
<dbReference type="HOGENOM" id="CLU_007838_1_0_9"/>
<dbReference type="GO" id="GO:0008409">
    <property type="term" value="F:5'-3' exonuclease activity"/>
    <property type="evidence" value="ECO:0007669"/>
    <property type="project" value="UniProtKB-UniRule"/>
</dbReference>
<dbReference type="GO" id="GO:0005524">
    <property type="term" value="F:ATP binding"/>
    <property type="evidence" value="ECO:0007669"/>
    <property type="project" value="UniProtKB-UniRule"/>
</dbReference>
<dbReference type="GO" id="GO:0003690">
    <property type="term" value="F:double-stranded DNA binding"/>
    <property type="evidence" value="ECO:0007669"/>
    <property type="project" value="UniProtKB-UniRule"/>
</dbReference>
<dbReference type="GO" id="GO:0004386">
    <property type="term" value="F:helicase activity"/>
    <property type="evidence" value="ECO:0007669"/>
    <property type="project" value="UniProtKB-KW"/>
</dbReference>
<dbReference type="GO" id="GO:0016817">
    <property type="term" value="F:hydrolase activity, acting on acid anhydrides"/>
    <property type="evidence" value="ECO:0007669"/>
    <property type="project" value="InterPro"/>
</dbReference>
<dbReference type="GO" id="GO:0000724">
    <property type="term" value="P:double-strand break repair via homologous recombination"/>
    <property type="evidence" value="ECO:0007669"/>
    <property type="project" value="UniProtKB-UniRule"/>
</dbReference>
<dbReference type="Gene3D" id="3.40.50.300">
    <property type="entry name" value="P-loop containing nucleotide triphosphate hydrolases"/>
    <property type="match status" value="4"/>
</dbReference>
<dbReference type="HAMAP" id="MF_01453">
    <property type="entry name" value="AddB_type2"/>
    <property type="match status" value="1"/>
</dbReference>
<dbReference type="InterPro" id="IPR049035">
    <property type="entry name" value="ADDB_N"/>
</dbReference>
<dbReference type="InterPro" id="IPR014141">
    <property type="entry name" value="DNA_helicase_suRexB"/>
</dbReference>
<dbReference type="InterPro" id="IPR027417">
    <property type="entry name" value="P-loop_NTPase"/>
</dbReference>
<dbReference type="InterPro" id="IPR038726">
    <property type="entry name" value="PDDEXK_AddAB-type"/>
</dbReference>
<dbReference type="InterPro" id="IPR011335">
    <property type="entry name" value="Restrct_endonuc-II-like"/>
</dbReference>
<dbReference type="NCBIfam" id="TIGR02774">
    <property type="entry name" value="rexB_recomb"/>
    <property type="match status" value="1"/>
</dbReference>
<dbReference type="PANTHER" id="PTHR30591">
    <property type="entry name" value="RECBCD ENZYME SUBUNIT RECC"/>
    <property type="match status" value="1"/>
</dbReference>
<dbReference type="PANTHER" id="PTHR30591:SF1">
    <property type="entry name" value="RECBCD ENZYME SUBUNIT RECC"/>
    <property type="match status" value="1"/>
</dbReference>
<dbReference type="Pfam" id="PF21445">
    <property type="entry name" value="ADDB_N"/>
    <property type="match status" value="1"/>
</dbReference>
<dbReference type="Pfam" id="PF12705">
    <property type="entry name" value="PDDEXK_1"/>
    <property type="match status" value="1"/>
</dbReference>
<dbReference type="SUPFAM" id="SSF52540">
    <property type="entry name" value="P-loop containing nucleoside triphosphate hydrolases"/>
    <property type="match status" value="1"/>
</dbReference>
<dbReference type="SUPFAM" id="SSF52980">
    <property type="entry name" value="Restriction endonuclease-like"/>
    <property type="match status" value="1"/>
</dbReference>
<comment type="function">
    <text evidence="1">The heterodimer acts as both an ATP-dependent DNA helicase and an ATP-dependent, dual-direction single-stranded exonuclease. Recognizes the chi site generating a DNA molecule suitable for the initiation of homologous recombination. This subunit has 5' -&gt; 3' nuclease activity but not helicase activity.</text>
</comment>
<comment type="cofactor">
    <cofactor evidence="1">
        <name>Mg(2+)</name>
        <dbReference type="ChEBI" id="CHEBI:18420"/>
    </cofactor>
</comment>
<comment type="subunit">
    <text evidence="1">Heterodimer of AddA and RexB.</text>
</comment>
<comment type="miscellaneous">
    <text evidence="1">Despite having helicase-like domains, this subunit does not have helicase activity.</text>
</comment>
<comment type="similarity">
    <text evidence="1">Belongs to the helicase family. AddB/RexB type 2 subfamily.</text>
</comment>
<proteinExistence type="inferred from homology"/>